<organism>
    <name type="scientific">Vanderwaltozyma polyspora (strain ATCC 22028 / DSM 70294 / BCRC 21397 / CBS 2163 / NBRC 10782 / NRRL Y-8283 / UCD 57-17)</name>
    <name type="common">Kluyveromyces polysporus</name>
    <dbReference type="NCBI Taxonomy" id="436907"/>
    <lineage>
        <taxon>Eukaryota</taxon>
        <taxon>Fungi</taxon>
        <taxon>Dikarya</taxon>
        <taxon>Ascomycota</taxon>
        <taxon>Saccharomycotina</taxon>
        <taxon>Saccharomycetes</taxon>
        <taxon>Saccharomycetales</taxon>
        <taxon>Saccharomycetaceae</taxon>
        <taxon>Vanderwaltozyma</taxon>
    </lineage>
</organism>
<accession>A7TST2</accession>
<feature type="chain" id="PRO_0000333358" description="Inclusion body clearance protein IML2">
    <location>
        <begin position="1"/>
        <end position="728"/>
    </location>
</feature>
<comment type="function">
    <text evidence="1">Inclusion body (IB) resident protein that interacts strongly with lipid droplet (LD) proteins. Involved in LD-mediated IB clearing after protein folding stress, probably by enabling access to the IBs of an LD-stored soluble sterol derivative that acts as a chaperone in inclusion clearing.</text>
</comment>
<comment type="subunit">
    <text evidence="1">Interacts with lipid droplet proteins.</text>
</comment>
<comment type="subcellular location">
    <subcellularLocation>
        <location evidence="1">Cytoplasm</location>
    </subcellularLocation>
    <subcellularLocation>
        <location evidence="1">Nucleus</location>
    </subcellularLocation>
    <text evidence="1">Localized exclusively in cytoplasmic inclusion bodies under protein folding stress conditions.</text>
</comment>
<comment type="similarity">
    <text evidence="2">Belongs to the IML2 family.</text>
</comment>
<reference key="1">
    <citation type="journal article" date="2007" name="Proc. Natl. Acad. Sci. U.S.A.">
        <title>Independent sorting-out of thousands of duplicated gene pairs in two yeast species descended from a whole-genome duplication.</title>
        <authorList>
            <person name="Scannell D.R."/>
            <person name="Frank A.C."/>
            <person name="Conant G.C."/>
            <person name="Byrne K.P."/>
            <person name="Woolfit M."/>
            <person name="Wolfe K.H."/>
        </authorList>
    </citation>
    <scope>NUCLEOTIDE SEQUENCE [LARGE SCALE GENOMIC DNA]</scope>
    <source>
        <strain>ATCC 22028 / DSM 70294 / BCRC 21397 / CBS 2163 / NBRC 10782 / NRRL Y-8283 / UCD 57-17</strain>
    </source>
</reference>
<name>IML2_VANPO</name>
<sequence length="728" mass="82930">MLRVFGSLTRSRSSSVLSQDDKIKQILKQAHDFEIALQAMDYVLDDRAEEGLALLKKNEAEDGSDQTINVLARGVIEFLEATLGFEAEEMKKASETLAKAENLSLKSRQYAQKNDLKSSSLYAPGTVYAVTYTESCLLHALLMIFSESYVETAKALLKLRKAYYMLQEIFEEMKKVKQTNGNMSIYKSETNHSEASVDSSNASFSSVDIPYELTREESNNSLYQESAEKVQKMRVRRLTGSHIGNTPAIDRLRSELGLDGPKVTTEENSNEYSALSENMDFSQATIDEFIHSGVNLCYGILQVVLSLLPSGIGAVLSVVGFHGSREDGLRLVWRATKQRNIHGCIGLLGLMFYYDGPFQFTDADFDIPVPENELKKTKSSSTYEEGDLDGPTLLHPGKILEDALLQSRALFPHSALWLLNEATMLSGQGRLRDSVKLMDSIEADKIEMRQVKSLLIFNRALTLVHLHEYERAADDFLSLLDISSWSHSLYHYFAGSCYLEIYRMHQLGVRKSDRPEHFKQRATDLIFGAPNLLTRKSFNARPLPLDRFMLRKVDQFKATQKRLKLSDPLDAIATSPVHELQYFYNGYNRMGKQDLELANIMLTEYHNPAIDAKEPNQEMIKDFLVSLTYRRLDRAEEGCELLDRNVLPKIFTMVNGKVKYFKKTEDPWLYPSALYERSLFSWKLKHMDGLEESKEWLTRAQGYADDYELSTRVEMKIKAAIDRVDESL</sequence>
<dbReference type="EMBL" id="DS480523">
    <property type="protein sequence ID" value="EDO14679.1"/>
    <property type="molecule type" value="Genomic_DNA"/>
</dbReference>
<dbReference type="RefSeq" id="XP_001642537.1">
    <property type="nucleotide sequence ID" value="XM_001642487.1"/>
</dbReference>
<dbReference type="FunCoup" id="A7TST2">
    <property type="interactions" value="131"/>
</dbReference>
<dbReference type="GeneID" id="5542698"/>
<dbReference type="KEGG" id="vpo:Kpol_282p6"/>
<dbReference type="eggNOG" id="KOG3783">
    <property type="taxonomic scope" value="Eukaryota"/>
</dbReference>
<dbReference type="HOGENOM" id="CLU_014926_0_0_1"/>
<dbReference type="InParanoid" id="A7TST2"/>
<dbReference type="OMA" id="WNGYNRM"/>
<dbReference type="OrthoDB" id="2154985at2759"/>
<dbReference type="PhylomeDB" id="A7TST2"/>
<dbReference type="Proteomes" id="UP000000267">
    <property type="component" value="Unassembled WGS sequence"/>
</dbReference>
<dbReference type="GO" id="GO:0005829">
    <property type="term" value="C:cytosol"/>
    <property type="evidence" value="ECO:0007669"/>
    <property type="project" value="TreeGrafter"/>
</dbReference>
<dbReference type="GO" id="GO:0005741">
    <property type="term" value="C:mitochondrial outer membrane"/>
    <property type="evidence" value="ECO:0007669"/>
    <property type="project" value="TreeGrafter"/>
</dbReference>
<dbReference type="GO" id="GO:0005634">
    <property type="term" value="C:nucleus"/>
    <property type="evidence" value="ECO:0007669"/>
    <property type="project" value="UniProtKB-SubCell"/>
</dbReference>
<dbReference type="InterPro" id="IPR019412">
    <property type="entry name" value="Iml2/TPR_39"/>
</dbReference>
<dbReference type="InterPro" id="IPR011990">
    <property type="entry name" value="TPR-like_helical_dom_sf"/>
</dbReference>
<dbReference type="PANTHER" id="PTHR31859">
    <property type="entry name" value="TETRATRICOPEPTIDE REPEAT PROTEIN 39 FAMILY MEMBER"/>
    <property type="match status" value="1"/>
</dbReference>
<dbReference type="PANTHER" id="PTHR31859:SF1">
    <property type="entry name" value="TETRATRICOPEPTIDE REPEAT PROTEIN 39C"/>
    <property type="match status" value="1"/>
</dbReference>
<dbReference type="Pfam" id="PF10300">
    <property type="entry name" value="Iml2-TPR_39"/>
    <property type="match status" value="1"/>
</dbReference>
<dbReference type="SUPFAM" id="SSF48452">
    <property type="entry name" value="TPR-like"/>
    <property type="match status" value="1"/>
</dbReference>
<protein>
    <recommendedName>
        <fullName>Inclusion body clearance protein IML2</fullName>
    </recommendedName>
</protein>
<keyword id="KW-0963">Cytoplasm</keyword>
<keyword id="KW-0539">Nucleus</keyword>
<keyword id="KW-0597">Phosphoprotein</keyword>
<keyword id="KW-1185">Reference proteome</keyword>
<evidence type="ECO:0000250" key="1">
    <source>
        <dbReference type="UniProtKB" id="P47031"/>
    </source>
</evidence>
<evidence type="ECO:0000305" key="2"/>
<proteinExistence type="inferred from homology"/>
<gene>
    <name type="primary">IML2</name>
    <name type="ORF">Kpol_282p6</name>
</gene>